<feature type="chain" id="PRO_0000212206" description="2,3-bisphosphoglycerate-independent phosphoglycerate mutase">
    <location>
        <begin position="1"/>
        <end position="505"/>
    </location>
</feature>
<feature type="active site" description="Phosphoserine intermediate" evidence="1">
    <location>
        <position position="63"/>
    </location>
</feature>
<feature type="binding site" evidence="1">
    <location>
        <position position="13"/>
    </location>
    <ligand>
        <name>Mn(2+)</name>
        <dbReference type="ChEBI" id="CHEBI:29035"/>
        <label>2</label>
    </ligand>
</feature>
<feature type="binding site" evidence="1">
    <location>
        <position position="63"/>
    </location>
    <ligand>
        <name>Mn(2+)</name>
        <dbReference type="ChEBI" id="CHEBI:29035"/>
        <label>2</label>
    </ligand>
</feature>
<feature type="binding site" evidence="1">
    <location>
        <position position="124"/>
    </location>
    <ligand>
        <name>substrate</name>
    </ligand>
</feature>
<feature type="binding site" evidence="1">
    <location>
        <begin position="153"/>
        <end position="154"/>
    </location>
    <ligand>
        <name>substrate</name>
    </ligand>
</feature>
<feature type="binding site" evidence="1">
    <location>
        <position position="183"/>
    </location>
    <ligand>
        <name>substrate</name>
    </ligand>
</feature>
<feature type="binding site" evidence="1">
    <location>
        <position position="189"/>
    </location>
    <ligand>
        <name>substrate</name>
    </ligand>
</feature>
<feature type="binding site" evidence="1">
    <location>
        <begin position="254"/>
        <end position="257"/>
    </location>
    <ligand>
        <name>substrate</name>
    </ligand>
</feature>
<feature type="binding site" evidence="1">
    <location>
        <position position="330"/>
    </location>
    <ligand>
        <name>substrate</name>
    </ligand>
</feature>
<feature type="binding site" evidence="1">
    <location>
        <position position="396"/>
    </location>
    <ligand>
        <name>Mn(2+)</name>
        <dbReference type="ChEBI" id="CHEBI:29035"/>
        <label>1</label>
    </ligand>
</feature>
<feature type="binding site" evidence="1">
    <location>
        <position position="400"/>
    </location>
    <ligand>
        <name>Mn(2+)</name>
        <dbReference type="ChEBI" id="CHEBI:29035"/>
        <label>1</label>
    </ligand>
</feature>
<feature type="binding site" evidence="1">
    <location>
        <position position="437"/>
    </location>
    <ligand>
        <name>Mn(2+)</name>
        <dbReference type="ChEBI" id="CHEBI:29035"/>
        <label>2</label>
    </ligand>
</feature>
<feature type="binding site" evidence="1">
    <location>
        <position position="438"/>
    </location>
    <ligand>
        <name>Mn(2+)</name>
        <dbReference type="ChEBI" id="CHEBI:29035"/>
        <label>2</label>
    </ligand>
</feature>
<feature type="binding site" evidence="1">
    <location>
        <position position="456"/>
    </location>
    <ligand>
        <name>Mn(2+)</name>
        <dbReference type="ChEBI" id="CHEBI:29035"/>
        <label>1</label>
    </ligand>
</feature>
<accession>Q5LLW1</accession>
<keyword id="KW-0324">Glycolysis</keyword>
<keyword id="KW-0413">Isomerase</keyword>
<keyword id="KW-0464">Manganese</keyword>
<keyword id="KW-0479">Metal-binding</keyword>
<keyword id="KW-1185">Reference proteome</keyword>
<protein>
    <recommendedName>
        <fullName evidence="1">2,3-bisphosphoglycerate-independent phosphoglycerate mutase</fullName>
        <shortName evidence="1">BPG-independent PGAM</shortName>
        <shortName evidence="1">Phosphoglyceromutase</shortName>
        <shortName evidence="1">iPGM</shortName>
        <ecNumber evidence="1">5.4.2.12</ecNumber>
    </recommendedName>
</protein>
<organism>
    <name type="scientific">Ruegeria pomeroyi (strain ATCC 700808 / DSM 15171 / DSS-3)</name>
    <name type="common">Silicibacter pomeroyi</name>
    <dbReference type="NCBI Taxonomy" id="246200"/>
    <lineage>
        <taxon>Bacteria</taxon>
        <taxon>Pseudomonadati</taxon>
        <taxon>Pseudomonadota</taxon>
        <taxon>Alphaproteobacteria</taxon>
        <taxon>Rhodobacterales</taxon>
        <taxon>Roseobacteraceae</taxon>
        <taxon>Ruegeria</taxon>
    </lineage>
</organism>
<sequence>MNAPKPVVLCILDGWGLSDDKTANAPYLAKTPTFDAIMTKGPHARLITHGPDVGLPSGQMGNSEVGHTNIGAGRVVAMDLGQIDLAIEDGSFFDNAALRDFIARTRAAGGTAHLMGLVSDGGVHGHLNHIIAAAQAITNAGVPVVMHAITDGRDVAPKSAYGFMAELEDRLPKGARIVTVTGRYFALDRDNRWERVQEAYDAMVRGEGRRVSTAHSAIDYAYNQSESDEFITASVLTGYDGMRDGDSLFCLNFRADRAREILRAIGEPGFADFDTGARPALSALLGMVEYSDAHNAYMTTVFPKRDIVNTLGAWVARHGLRQFRLAETEKYPHVTFFLNGGKEEAEPGEDRFMPKSPKVATYDMQPEMSAPEVTDKFVEAIGAGYDLIVTNYANPDMVGHTGDLKAAIKACEAVDQGLSRVIAALEQAGGAMIVTADHGNCEMMIDPETGGPHTAHTLNPVPVALVGGPAGVTLRDGRLSDLAPTVLALMGLPKPPEMTGESLIT</sequence>
<evidence type="ECO:0000255" key="1">
    <source>
        <dbReference type="HAMAP-Rule" id="MF_01038"/>
    </source>
</evidence>
<gene>
    <name evidence="1" type="primary">gpmI</name>
    <name type="ordered locus">SPO3810</name>
</gene>
<reference key="1">
    <citation type="journal article" date="2004" name="Nature">
        <title>Genome sequence of Silicibacter pomeroyi reveals adaptations to the marine environment.</title>
        <authorList>
            <person name="Moran M.A."/>
            <person name="Buchan A."/>
            <person name="Gonzalez J.M."/>
            <person name="Heidelberg J.F."/>
            <person name="Whitman W.B."/>
            <person name="Kiene R.P."/>
            <person name="Henriksen J.R."/>
            <person name="King G.M."/>
            <person name="Belas R."/>
            <person name="Fuqua C."/>
            <person name="Brinkac L.M."/>
            <person name="Lewis M."/>
            <person name="Johri S."/>
            <person name="Weaver B."/>
            <person name="Pai G."/>
            <person name="Eisen J.A."/>
            <person name="Rahe E."/>
            <person name="Sheldon W.M."/>
            <person name="Ye W."/>
            <person name="Miller T.R."/>
            <person name="Carlton J."/>
            <person name="Rasko D.A."/>
            <person name="Paulsen I.T."/>
            <person name="Ren Q."/>
            <person name="Daugherty S.C."/>
            <person name="DeBoy R.T."/>
            <person name="Dodson R.J."/>
            <person name="Durkin A.S."/>
            <person name="Madupu R."/>
            <person name="Nelson W.C."/>
            <person name="Sullivan S.A."/>
            <person name="Rosovitz M.J."/>
            <person name="Haft D.H."/>
            <person name="Selengut J."/>
            <person name="Ward N."/>
        </authorList>
    </citation>
    <scope>NUCLEOTIDE SEQUENCE [LARGE SCALE GENOMIC DNA]</scope>
    <source>
        <strain>ATCC 700808 / DSM 15171 / DSS-3</strain>
    </source>
</reference>
<reference key="2">
    <citation type="journal article" date="2014" name="Stand. Genomic Sci.">
        <title>An updated genome annotation for the model marine bacterium Ruegeria pomeroyi DSS-3.</title>
        <authorList>
            <person name="Rivers A.R."/>
            <person name="Smith C.B."/>
            <person name="Moran M.A."/>
        </authorList>
    </citation>
    <scope>GENOME REANNOTATION</scope>
    <source>
        <strain>ATCC 700808 / DSM 15171 / DSS-3</strain>
    </source>
</reference>
<dbReference type="EC" id="5.4.2.12" evidence="1"/>
<dbReference type="EMBL" id="CP000031">
    <property type="protein sequence ID" value="AAV97024.1"/>
    <property type="molecule type" value="Genomic_DNA"/>
</dbReference>
<dbReference type="RefSeq" id="WP_011049482.1">
    <property type="nucleotide sequence ID" value="NC_003911.12"/>
</dbReference>
<dbReference type="SMR" id="Q5LLW1"/>
<dbReference type="STRING" id="246200.SPO3810"/>
<dbReference type="PaxDb" id="246200-SPO3810"/>
<dbReference type="KEGG" id="sil:SPO3810"/>
<dbReference type="eggNOG" id="COG0696">
    <property type="taxonomic scope" value="Bacteria"/>
</dbReference>
<dbReference type="HOGENOM" id="CLU_026099_2_0_5"/>
<dbReference type="OrthoDB" id="9800863at2"/>
<dbReference type="UniPathway" id="UPA00109">
    <property type="reaction ID" value="UER00186"/>
</dbReference>
<dbReference type="Proteomes" id="UP000001023">
    <property type="component" value="Chromosome"/>
</dbReference>
<dbReference type="GO" id="GO:0005829">
    <property type="term" value="C:cytosol"/>
    <property type="evidence" value="ECO:0007669"/>
    <property type="project" value="TreeGrafter"/>
</dbReference>
<dbReference type="GO" id="GO:0030145">
    <property type="term" value="F:manganese ion binding"/>
    <property type="evidence" value="ECO:0007669"/>
    <property type="project" value="UniProtKB-UniRule"/>
</dbReference>
<dbReference type="GO" id="GO:0004619">
    <property type="term" value="F:phosphoglycerate mutase activity"/>
    <property type="evidence" value="ECO:0007669"/>
    <property type="project" value="UniProtKB-EC"/>
</dbReference>
<dbReference type="GO" id="GO:0006007">
    <property type="term" value="P:glucose catabolic process"/>
    <property type="evidence" value="ECO:0007669"/>
    <property type="project" value="InterPro"/>
</dbReference>
<dbReference type="GO" id="GO:0006096">
    <property type="term" value="P:glycolytic process"/>
    <property type="evidence" value="ECO:0007669"/>
    <property type="project" value="UniProtKB-UniRule"/>
</dbReference>
<dbReference type="CDD" id="cd16010">
    <property type="entry name" value="iPGM"/>
    <property type="match status" value="1"/>
</dbReference>
<dbReference type="FunFam" id="3.40.1450.10:FF:000002">
    <property type="entry name" value="2,3-bisphosphoglycerate-independent phosphoglycerate mutase"/>
    <property type="match status" value="1"/>
</dbReference>
<dbReference type="Gene3D" id="3.40.720.10">
    <property type="entry name" value="Alkaline Phosphatase, subunit A"/>
    <property type="match status" value="1"/>
</dbReference>
<dbReference type="Gene3D" id="3.40.1450.10">
    <property type="entry name" value="BPG-independent phosphoglycerate mutase, domain B"/>
    <property type="match status" value="1"/>
</dbReference>
<dbReference type="HAMAP" id="MF_01038">
    <property type="entry name" value="GpmI"/>
    <property type="match status" value="1"/>
</dbReference>
<dbReference type="InterPro" id="IPR017850">
    <property type="entry name" value="Alkaline_phosphatase_core_sf"/>
</dbReference>
<dbReference type="InterPro" id="IPR011258">
    <property type="entry name" value="BPG-indep_PGM_N"/>
</dbReference>
<dbReference type="InterPro" id="IPR006124">
    <property type="entry name" value="Metalloenzyme"/>
</dbReference>
<dbReference type="InterPro" id="IPR036646">
    <property type="entry name" value="PGAM_B_sf"/>
</dbReference>
<dbReference type="InterPro" id="IPR005995">
    <property type="entry name" value="Pgm_bpd_ind"/>
</dbReference>
<dbReference type="NCBIfam" id="TIGR01307">
    <property type="entry name" value="pgm_bpd_ind"/>
    <property type="match status" value="1"/>
</dbReference>
<dbReference type="PANTHER" id="PTHR31637">
    <property type="entry name" value="2,3-BISPHOSPHOGLYCERATE-INDEPENDENT PHOSPHOGLYCERATE MUTASE"/>
    <property type="match status" value="1"/>
</dbReference>
<dbReference type="PANTHER" id="PTHR31637:SF0">
    <property type="entry name" value="2,3-BISPHOSPHOGLYCERATE-INDEPENDENT PHOSPHOGLYCERATE MUTASE"/>
    <property type="match status" value="1"/>
</dbReference>
<dbReference type="Pfam" id="PF06415">
    <property type="entry name" value="iPGM_N"/>
    <property type="match status" value="1"/>
</dbReference>
<dbReference type="Pfam" id="PF01676">
    <property type="entry name" value="Metalloenzyme"/>
    <property type="match status" value="1"/>
</dbReference>
<dbReference type="PIRSF" id="PIRSF001492">
    <property type="entry name" value="IPGAM"/>
    <property type="match status" value="1"/>
</dbReference>
<dbReference type="SUPFAM" id="SSF64158">
    <property type="entry name" value="2,3-Bisphosphoglycerate-independent phosphoglycerate mutase, substrate-binding domain"/>
    <property type="match status" value="1"/>
</dbReference>
<dbReference type="SUPFAM" id="SSF53649">
    <property type="entry name" value="Alkaline phosphatase-like"/>
    <property type="match status" value="1"/>
</dbReference>
<comment type="function">
    <text evidence="1">Catalyzes the interconversion of 2-phosphoglycerate and 3-phosphoglycerate.</text>
</comment>
<comment type="catalytic activity">
    <reaction evidence="1">
        <text>(2R)-2-phosphoglycerate = (2R)-3-phosphoglycerate</text>
        <dbReference type="Rhea" id="RHEA:15901"/>
        <dbReference type="ChEBI" id="CHEBI:58272"/>
        <dbReference type="ChEBI" id="CHEBI:58289"/>
        <dbReference type="EC" id="5.4.2.12"/>
    </reaction>
</comment>
<comment type="cofactor">
    <cofactor evidence="1">
        <name>Mn(2+)</name>
        <dbReference type="ChEBI" id="CHEBI:29035"/>
    </cofactor>
    <text evidence="1">Binds 2 manganese ions per subunit.</text>
</comment>
<comment type="pathway">
    <text evidence="1">Carbohydrate degradation; glycolysis; pyruvate from D-glyceraldehyde 3-phosphate: step 3/5.</text>
</comment>
<comment type="subunit">
    <text evidence="1">Monomer.</text>
</comment>
<comment type="similarity">
    <text evidence="1">Belongs to the BPG-independent phosphoglycerate mutase family.</text>
</comment>
<proteinExistence type="inferred from homology"/>
<name>GPMI_RUEPO</name>